<organism>
    <name type="scientific">Bos taurus</name>
    <name type="common">Bovine</name>
    <dbReference type="NCBI Taxonomy" id="9913"/>
    <lineage>
        <taxon>Eukaryota</taxon>
        <taxon>Metazoa</taxon>
        <taxon>Chordata</taxon>
        <taxon>Craniata</taxon>
        <taxon>Vertebrata</taxon>
        <taxon>Euteleostomi</taxon>
        <taxon>Mammalia</taxon>
        <taxon>Eutheria</taxon>
        <taxon>Laurasiatheria</taxon>
        <taxon>Artiodactyla</taxon>
        <taxon>Ruminantia</taxon>
        <taxon>Pecora</taxon>
        <taxon>Bovidae</taxon>
        <taxon>Bovinae</taxon>
        <taxon>Bos</taxon>
    </lineage>
</organism>
<name>3BP5L_BOVIN</name>
<gene>
    <name type="primary">SH3BP5L</name>
</gene>
<dbReference type="EMBL" id="BC119925">
    <property type="protein sequence ID" value="AAI19926.1"/>
    <property type="molecule type" value="mRNA"/>
</dbReference>
<dbReference type="EMBL" id="BT026211">
    <property type="protein sequence ID" value="ABG67050.1"/>
    <property type="molecule type" value="mRNA"/>
</dbReference>
<dbReference type="RefSeq" id="NP_001069270.1">
    <property type="nucleotide sequence ID" value="NM_001075802.1"/>
</dbReference>
<dbReference type="RefSeq" id="XP_024850015.1">
    <property type="nucleotide sequence ID" value="XM_024994247.2"/>
</dbReference>
<dbReference type="SMR" id="Q0V8K7"/>
<dbReference type="FunCoup" id="Q0V8K7">
    <property type="interactions" value="3552"/>
</dbReference>
<dbReference type="STRING" id="9913.ENSBTAP00000003422"/>
<dbReference type="PaxDb" id="9913-ENSBTAP00000003422"/>
<dbReference type="GeneID" id="520254"/>
<dbReference type="KEGG" id="bta:520254"/>
<dbReference type="CTD" id="80851"/>
<dbReference type="VEuPathDB" id="HostDB:ENSBTAG00000002645"/>
<dbReference type="eggNOG" id="KOG2008">
    <property type="taxonomic scope" value="Eukaryota"/>
</dbReference>
<dbReference type="HOGENOM" id="CLU_043711_0_0_1"/>
<dbReference type="InParanoid" id="Q0V8K7"/>
<dbReference type="OrthoDB" id="446789at2759"/>
<dbReference type="Proteomes" id="UP000009136">
    <property type="component" value="Chromosome 7"/>
</dbReference>
<dbReference type="Bgee" id="ENSBTAG00000002645">
    <property type="expression patterns" value="Expressed in retina and 104 other cell types or tissues"/>
</dbReference>
<dbReference type="GO" id="GO:0005737">
    <property type="term" value="C:cytoplasm"/>
    <property type="evidence" value="ECO:0000318"/>
    <property type="project" value="GO_Central"/>
</dbReference>
<dbReference type="GO" id="GO:0005085">
    <property type="term" value="F:guanyl-nucleotide exchange factor activity"/>
    <property type="evidence" value="ECO:0000250"/>
    <property type="project" value="UniProtKB"/>
</dbReference>
<dbReference type="GO" id="GO:0004860">
    <property type="term" value="F:protein kinase inhibitor activity"/>
    <property type="evidence" value="ECO:0000318"/>
    <property type="project" value="GO_Central"/>
</dbReference>
<dbReference type="GO" id="GO:0035556">
    <property type="term" value="P:intracellular signal transduction"/>
    <property type="evidence" value="ECO:0000318"/>
    <property type="project" value="GO_Central"/>
</dbReference>
<dbReference type="InterPro" id="IPR007940">
    <property type="entry name" value="SH3BP5"/>
</dbReference>
<dbReference type="PANTHER" id="PTHR19423">
    <property type="entry name" value="SH3 DOMAIN-BINDING PROTEIN 5"/>
    <property type="match status" value="1"/>
</dbReference>
<dbReference type="PANTHER" id="PTHR19423:SF8">
    <property type="entry name" value="SH3 DOMAIN-BINDING PROTEIN 5-LIKE"/>
    <property type="match status" value="1"/>
</dbReference>
<dbReference type="Pfam" id="PF05276">
    <property type="entry name" value="SH3BP5"/>
    <property type="match status" value="1"/>
</dbReference>
<keyword id="KW-0175">Coiled coil</keyword>
<keyword id="KW-0344">Guanine-nucleotide releasing factor</keyword>
<keyword id="KW-0597">Phosphoprotein</keyword>
<keyword id="KW-1185">Reference proteome</keyword>
<protein>
    <recommendedName>
        <fullName>SH3 domain-binding protein 5-like</fullName>
        <shortName>SH3BP-5-like</shortName>
    </recommendedName>
</protein>
<accession>Q0V8K7</accession>
<proteinExistence type="evidence at transcript level"/>
<sequence>MAELRQIPGGRETPQGELRPEVVEDEVPRSPVAEEPGGGGSNSSEAKLSPREEEELDPRIQEELEHLNQASEEINQVELQLDEARTTYRRILQESARKLNTQGSHLGSCIEKARPYYEARRLAKEAQQETQKAALRYERAVSMHNAAREMVFVAEQGVMADKNRLDPTWQEMLNHATCKVNEAEEERLRGEREHQRVTRLCQQAEARVQALQKTLRRAIGKSRPYFELKAQFSQILEEHKAKVTELEQQVAQAKTRYSVALRNLEQISEQIHARRRGQPAHTPGQRRSSPVGAEAGPDGGEDADSGIIEGAEGGGLEEGVSLGPGAAPDTDTLSLLSLRTVASDLQKCDSVEHLRGLSDHTSLDGQELGPRSGGRGGRHQRSISL</sequence>
<comment type="function">
    <text evidence="1">Functions as a guanine nucleotide exchange factor (GEF) for RAB11A.</text>
</comment>
<comment type="similarity">
    <text evidence="5">Belongs to the SH3BP5 family.</text>
</comment>
<reference key="1">
    <citation type="journal article" date="2005" name="BMC Genomics">
        <title>Characterization of 954 bovine full-CDS cDNA sequences.</title>
        <authorList>
            <person name="Harhay G.P."/>
            <person name="Sonstegard T.S."/>
            <person name="Keele J.W."/>
            <person name="Heaton M.P."/>
            <person name="Clawson M.L."/>
            <person name="Snelling W.M."/>
            <person name="Wiedmann R.T."/>
            <person name="Van Tassell C.P."/>
            <person name="Smith T.P.L."/>
        </authorList>
    </citation>
    <scope>NUCLEOTIDE SEQUENCE [LARGE SCALE MRNA]</scope>
</reference>
<reference key="2">
    <citation type="submission" date="2006-08" db="EMBL/GenBank/DDBJ databases">
        <authorList>
            <consortium name="NIH - Mammalian Gene Collection (MGC) project"/>
        </authorList>
    </citation>
    <scope>NUCLEOTIDE SEQUENCE [LARGE SCALE MRNA]</scope>
    <source>
        <strain>Hereford</strain>
        <tissue>Thalamus</tissue>
    </source>
</reference>
<evidence type="ECO:0000250" key="1">
    <source>
        <dbReference type="UniProtKB" id="Q7L8J4"/>
    </source>
</evidence>
<evidence type="ECO:0000250" key="2">
    <source>
        <dbReference type="UniProtKB" id="Q99LH9"/>
    </source>
</evidence>
<evidence type="ECO:0000255" key="3"/>
<evidence type="ECO:0000256" key="4">
    <source>
        <dbReference type="SAM" id="MobiDB-lite"/>
    </source>
</evidence>
<evidence type="ECO:0000305" key="5"/>
<feature type="chain" id="PRO_0000317507" description="SH3 domain-binding protein 5-like">
    <location>
        <begin position="1"/>
        <end position="385"/>
    </location>
</feature>
<feature type="region of interest" description="Disordered" evidence="4">
    <location>
        <begin position="1"/>
        <end position="58"/>
    </location>
</feature>
<feature type="region of interest" description="Disordered" evidence="4">
    <location>
        <begin position="272"/>
        <end position="328"/>
    </location>
</feature>
<feature type="region of interest" description="Disordered" evidence="4">
    <location>
        <begin position="359"/>
        <end position="385"/>
    </location>
</feature>
<feature type="coiled-coil region" evidence="3">
    <location>
        <begin position="59"/>
        <end position="140"/>
    </location>
</feature>
<feature type="coiled-coil region" evidence="3">
    <location>
        <begin position="169"/>
        <end position="272"/>
    </location>
</feature>
<feature type="compositionally biased region" description="Basic and acidic residues" evidence="4">
    <location>
        <begin position="18"/>
        <end position="28"/>
    </location>
</feature>
<feature type="compositionally biased region" description="Low complexity" evidence="4">
    <location>
        <begin position="318"/>
        <end position="328"/>
    </location>
</feature>
<feature type="compositionally biased region" description="Basic residues" evidence="4">
    <location>
        <begin position="376"/>
        <end position="385"/>
    </location>
</feature>
<feature type="modified residue" description="Phosphothreonine" evidence="1">
    <location>
        <position position="13"/>
    </location>
</feature>
<feature type="modified residue" description="Phosphoserine" evidence="1">
    <location>
        <position position="30"/>
    </location>
</feature>
<feature type="modified residue" description="Phosphoserine" evidence="2">
    <location>
        <position position="49"/>
    </location>
</feature>
<feature type="modified residue" description="Phosphoserine" evidence="1">
    <location>
        <position position="343"/>
    </location>
</feature>
<feature type="modified residue" description="Phosphoserine" evidence="1">
    <location>
        <position position="350"/>
    </location>
</feature>
<feature type="modified residue" description="Phosphoserine" evidence="1">
    <location>
        <position position="358"/>
    </location>
</feature>
<feature type="modified residue" description="Phosphoserine" evidence="1">
    <location>
        <position position="362"/>
    </location>
</feature>